<feature type="chain" id="PRO_1000200796" description="Multidrug resistance protein MdtH">
    <location>
        <begin position="1"/>
        <end position="402"/>
    </location>
</feature>
<feature type="topological domain" description="Cytoplasmic" evidence="1">
    <location>
        <begin position="1"/>
        <end position="12"/>
    </location>
</feature>
<feature type="transmembrane region" description="Helical" evidence="1">
    <location>
        <begin position="13"/>
        <end position="33"/>
    </location>
</feature>
<feature type="topological domain" description="Periplasmic" evidence="1">
    <location>
        <begin position="34"/>
        <end position="98"/>
    </location>
</feature>
<feature type="transmembrane region" description="Helical" evidence="1">
    <location>
        <begin position="99"/>
        <end position="116"/>
    </location>
</feature>
<feature type="topological domain" description="Cytoplasmic" evidence="1">
    <location>
        <begin position="117"/>
        <end position="138"/>
    </location>
</feature>
<feature type="transmembrane region" description="Helical" evidence="1">
    <location>
        <begin position="139"/>
        <end position="159"/>
    </location>
</feature>
<feature type="topological domain" description="Periplasmic" evidence="1">
    <location>
        <begin position="160"/>
        <end position="164"/>
    </location>
</feature>
<feature type="transmembrane region" description="Helical" evidence="1">
    <location>
        <begin position="165"/>
        <end position="185"/>
    </location>
</feature>
<feature type="topological domain" description="Cytoplasmic" evidence="1">
    <location>
        <begin position="186"/>
        <end position="213"/>
    </location>
</feature>
<feature type="transmembrane region" description="Helical" evidence="1">
    <location>
        <begin position="214"/>
        <end position="234"/>
    </location>
</feature>
<feature type="topological domain" description="Periplasmic" evidence="1">
    <location>
        <begin position="235"/>
        <end position="243"/>
    </location>
</feature>
<feature type="transmembrane region" description="Helical" evidence="1">
    <location>
        <begin position="244"/>
        <end position="264"/>
    </location>
</feature>
<feature type="topological domain" description="Cytoplasmic" evidence="1">
    <location>
        <begin position="265"/>
        <end position="276"/>
    </location>
</feature>
<feature type="transmembrane region" description="Helical" evidence="1">
    <location>
        <begin position="277"/>
        <end position="297"/>
    </location>
</feature>
<feature type="topological domain" description="Periplasmic" evidence="1">
    <location>
        <begin position="298"/>
        <end position="299"/>
    </location>
</feature>
<feature type="transmembrane region" description="Helical" evidence="1">
    <location>
        <begin position="300"/>
        <end position="320"/>
    </location>
</feature>
<feature type="topological domain" description="Cytoplasmic" evidence="1">
    <location>
        <begin position="321"/>
        <end position="339"/>
    </location>
</feature>
<feature type="transmembrane region" description="Helical" evidence="1">
    <location>
        <begin position="340"/>
        <end position="360"/>
    </location>
</feature>
<feature type="topological domain" description="Periplasmic" evidence="1">
    <location>
        <begin position="361"/>
        <end position="367"/>
    </location>
</feature>
<feature type="transmembrane region" description="Helical" evidence="1">
    <location>
        <begin position="368"/>
        <end position="388"/>
    </location>
</feature>
<feature type="topological domain" description="Cytoplasmic" evidence="1">
    <location>
        <begin position="389"/>
        <end position="402"/>
    </location>
</feature>
<comment type="function">
    <text evidence="1">Confers resistance to norfloxacin and enoxacin.</text>
</comment>
<comment type="subcellular location">
    <subcellularLocation>
        <location evidence="1">Cell inner membrane</location>
        <topology evidence="1">Multi-pass membrane protein</topology>
    </subcellularLocation>
</comment>
<comment type="similarity">
    <text evidence="1">Belongs to the major facilitator superfamily. DHA1 family. MdtH (TC 2.A.1.2.21) subfamily.</text>
</comment>
<accession>B1LIU5</accession>
<proteinExistence type="inferred from homology"/>
<evidence type="ECO:0000255" key="1">
    <source>
        <dbReference type="HAMAP-Rule" id="MF_01529"/>
    </source>
</evidence>
<organism>
    <name type="scientific">Escherichia coli (strain SMS-3-5 / SECEC)</name>
    <dbReference type="NCBI Taxonomy" id="439855"/>
    <lineage>
        <taxon>Bacteria</taxon>
        <taxon>Pseudomonadati</taxon>
        <taxon>Pseudomonadota</taxon>
        <taxon>Gammaproteobacteria</taxon>
        <taxon>Enterobacterales</taxon>
        <taxon>Enterobacteriaceae</taxon>
        <taxon>Escherichia</taxon>
    </lineage>
</organism>
<gene>
    <name evidence="1" type="primary">mdtH</name>
    <name type="ordered locus">EcSMS35_2064</name>
</gene>
<keyword id="KW-0046">Antibiotic resistance</keyword>
<keyword id="KW-0997">Cell inner membrane</keyword>
<keyword id="KW-1003">Cell membrane</keyword>
<keyword id="KW-0472">Membrane</keyword>
<keyword id="KW-0812">Transmembrane</keyword>
<keyword id="KW-1133">Transmembrane helix</keyword>
<keyword id="KW-0813">Transport</keyword>
<name>MDTH_ECOSM</name>
<reference key="1">
    <citation type="journal article" date="2008" name="J. Bacteriol.">
        <title>Insights into the environmental resistance gene pool from the genome sequence of the multidrug-resistant environmental isolate Escherichia coli SMS-3-5.</title>
        <authorList>
            <person name="Fricke W.F."/>
            <person name="Wright M.S."/>
            <person name="Lindell A.H."/>
            <person name="Harkins D.M."/>
            <person name="Baker-Austin C."/>
            <person name="Ravel J."/>
            <person name="Stepanauskas R."/>
        </authorList>
    </citation>
    <scope>NUCLEOTIDE SEQUENCE [LARGE SCALE GENOMIC DNA]</scope>
    <source>
        <strain>SMS-3-5 / SECEC</strain>
    </source>
</reference>
<sequence>MSRVSQARNLGKYFLLIDNMLVVLGFFVVFPLISIRFVDQMGWAAVMVGIALGLRQFIQQGLGIFGGAIADRFGAKPMIVTGMLMRAAGFATMGIAHEPWLLWFSCLLSGLGGTLFDPPRSALVVKLIRPQQRGRFFSLLMMQDSAGAVIGALLGSWLLQYDFRLVCATGAVLFVLCAAFNAWLLPAWKLSTVRTPVREGMTRVMRDKRFVTYVLTLAGYYMLAVQVMLMLPIMVNDVAGAPSAVKWMYAIEACLSLTLLYPIARWSEKHFRLEHRLMAGLLIMSLSMMPVGMVSGLQQLFTLICLFYIGSIIAEPARETLSASLADARARGSYMGFSRLGLAIGGAIGYIGGGWLFDLGKSAHQPELPWMMLGIIGIFTFLALGWQFSQKRTARRLLERDA</sequence>
<dbReference type="EMBL" id="CP000970">
    <property type="protein sequence ID" value="ACB17244.1"/>
    <property type="molecule type" value="Genomic_DNA"/>
</dbReference>
<dbReference type="RefSeq" id="WP_000092207.1">
    <property type="nucleotide sequence ID" value="NC_010498.1"/>
</dbReference>
<dbReference type="SMR" id="B1LIU5"/>
<dbReference type="KEGG" id="ecm:EcSMS35_2064"/>
<dbReference type="HOGENOM" id="CLU_001265_60_2_6"/>
<dbReference type="Proteomes" id="UP000007011">
    <property type="component" value="Chromosome"/>
</dbReference>
<dbReference type="GO" id="GO:0005886">
    <property type="term" value="C:plasma membrane"/>
    <property type="evidence" value="ECO:0007669"/>
    <property type="project" value="UniProtKB-SubCell"/>
</dbReference>
<dbReference type="GO" id="GO:0022857">
    <property type="term" value="F:transmembrane transporter activity"/>
    <property type="evidence" value="ECO:0007669"/>
    <property type="project" value="UniProtKB-UniRule"/>
</dbReference>
<dbReference type="GO" id="GO:0046677">
    <property type="term" value="P:response to antibiotic"/>
    <property type="evidence" value="ECO:0007669"/>
    <property type="project" value="UniProtKB-KW"/>
</dbReference>
<dbReference type="CDD" id="cd17329">
    <property type="entry name" value="MFS_MdtH_MDR_like"/>
    <property type="match status" value="1"/>
</dbReference>
<dbReference type="FunFam" id="1.20.1250.20:FF:000039">
    <property type="entry name" value="Multidrug resistance protein MdtH"/>
    <property type="match status" value="1"/>
</dbReference>
<dbReference type="Gene3D" id="1.20.1250.20">
    <property type="entry name" value="MFS general substrate transporter like domains"/>
    <property type="match status" value="1"/>
</dbReference>
<dbReference type="HAMAP" id="MF_01529">
    <property type="entry name" value="MFS_MdtH"/>
    <property type="match status" value="1"/>
</dbReference>
<dbReference type="InterPro" id="IPR011701">
    <property type="entry name" value="MFS"/>
</dbReference>
<dbReference type="InterPro" id="IPR020846">
    <property type="entry name" value="MFS_dom"/>
</dbReference>
<dbReference type="InterPro" id="IPR036259">
    <property type="entry name" value="MFS_trans_sf"/>
</dbReference>
<dbReference type="InterPro" id="IPR050171">
    <property type="entry name" value="MFS_Transporters"/>
</dbReference>
<dbReference type="InterPro" id="IPR022855">
    <property type="entry name" value="Multidrug-R_MdtH"/>
</dbReference>
<dbReference type="NCBIfam" id="NF008650">
    <property type="entry name" value="PRK11646.1"/>
    <property type="match status" value="1"/>
</dbReference>
<dbReference type="PANTHER" id="PTHR23517:SF2">
    <property type="entry name" value="MULTIDRUG RESISTANCE PROTEIN MDTH"/>
    <property type="match status" value="1"/>
</dbReference>
<dbReference type="PANTHER" id="PTHR23517">
    <property type="entry name" value="RESISTANCE PROTEIN MDTM, PUTATIVE-RELATED-RELATED"/>
    <property type="match status" value="1"/>
</dbReference>
<dbReference type="Pfam" id="PF07690">
    <property type="entry name" value="MFS_1"/>
    <property type="match status" value="1"/>
</dbReference>
<dbReference type="SUPFAM" id="SSF103473">
    <property type="entry name" value="MFS general substrate transporter"/>
    <property type="match status" value="1"/>
</dbReference>
<dbReference type="PROSITE" id="PS50850">
    <property type="entry name" value="MFS"/>
    <property type="match status" value="1"/>
</dbReference>
<protein>
    <recommendedName>
        <fullName evidence="1">Multidrug resistance protein MdtH</fullName>
    </recommendedName>
</protein>